<proteinExistence type="evidence at protein level"/>
<organism>
    <name type="scientific">Schizosaccharomyces pombe (strain 972 / ATCC 24843)</name>
    <name type="common">Fission yeast</name>
    <dbReference type="NCBI Taxonomy" id="284812"/>
    <lineage>
        <taxon>Eukaryota</taxon>
        <taxon>Fungi</taxon>
        <taxon>Dikarya</taxon>
        <taxon>Ascomycota</taxon>
        <taxon>Taphrinomycotina</taxon>
        <taxon>Schizosaccharomycetes</taxon>
        <taxon>Schizosaccharomycetales</taxon>
        <taxon>Schizosaccharomycetaceae</taxon>
        <taxon>Schizosaccharomyces</taxon>
    </lineage>
</organism>
<protein>
    <recommendedName>
        <fullName>Uncharacterized protein C24B10.19c</fullName>
    </recommendedName>
</protein>
<keyword id="KW-0597">Phosphoprotein</keyword>
<keyword id="KW-1185">Reference proteome</keyword>
<gene>
    <name type="ORF">SPCC24B10.19c</name>
</gene>
<dbReference type="EMBL" id="CU329672">
    <property type="protein sequence ID" value="CAB76228.2"/>
    <property type="molecule type" value="Genomic_DNA"/>
</dbReference>
<dbReference type="PIR" id="T50426">
    <property type="entry name" value="T50426"/>
</dbReference>
<dbReference type="SMR" id="Q9P7I7"/>
<dbReference type="BioGRID" id="275484">
    <property type="interactions" value="73"/>
</dbReference>
<dbReference type="STRING" id="284812.Q9P7I7"/>
<dbReference type="iPTMnet" id="Q9P7I7"/>
<dbReference type="PaxDb" id="4896-SPCC24B10.19c.1"/>
<dbReference type="EnsemblFungi" id="SPCC24B10.19c.1">
    <property type="protein sequence ID" value="SPCC24B10.19c.1:pep"/>
    <property type="gene ID" value="SPCC24B10.19c"/>
</dbReference>
<dbReference type="KEGG" id="spo:2538907"/>
<dbReference type="PomBase" id="SPCC24B10.19c"/>
<dbReference type="VEuPathDB" id="FungiDB:SPCC24B10.19c"/>
<dbReference type="HOGENOM" id="CLU_619883_0_0_1"/>
<dbReference type="InParanoid" id="Q9P7I7"/>
<dbReference type="OMA" id="ANLCIQY"/>
<dbReference type="PRO" id="PR:Q9P7I7"/>
<dbReference type="Proteomes" id="UP000002485">
    <property type="component" value="Chromosome III"/>
</dbReference>
<dbReference type="GO" id="GO:0000785">
    <property type="term" value="C:chromatin"/>
    <property type="evidence" value="ECO:0000314"/>
    <property type="project" value="PomBase"/>
</dbReference>
<dbReference type="GO" id="GO:0005634">
    <property type="term" value="C:nucleus"/>
    <property type="evidence" value="ECO:0000314"/>
    <property type="project" value="PomBase"/>
</dbReference>
<dbReference type="GO" id="GO:0045815">
    <property type="term" value="P:transcription initiation-coupled chromatin remodeling"/>
    <property type="evidence" value="ECO:0000315"/>
    <property type="project" value="PomBase"/>
</dbReference>
<evidence type="ECO:0000256" key="1">
    <source>
        <dbReference type="SAM" id="MobiDB-lite"/>
    </source>
</evidence>
<evidence type="ECO:0000269" key="2">
    <source>
    </source>
</evidence>
<reference key="1">
    <citation type="journal article" date="2002" name="Nature">
        <title>The genome sequence of Schizosaccharomyces pombe.</title>
        <authorList>
            <person name="Wood V."/>
            <person name="Gwilliam R."/>
            <person name="Rajandream M.A."/>
            <person name="Lyne M.H."/>
            <person name="Lyne R."/>
            <person name="Stewart A."/>
            <person name="Sgouros J.G."/>
            <person name="Peat N."/>
            <person name="Hayles J."/>
            <person name="Baker S.G."/>
            <person name="Basham D."/>
            <person name="Bowman S."/>
            <person name="Brooks K."/>
            <person name="Brown D."/>
            <person name="Brown S."/>
            <person name="Chillingworth T."/>
            <person name="Churcher C.M."/>
            <person name="Collins M."/>
            <person name="Connor R."/>
            <person name="Cronin A."/>
            <person name="Davis P."/>
            <person name="Feltwell T."/>
            <person name="Fraser A."/>
            <person name="Gentles S."/>
            <person name="Goble A."/>
            <person name="Hamlin N."/>
            <person name="Harris D.E."/>
            <person name="Hidalgo J."/>
            <person name="Hodgson G."/>
            <person name="Holroyd S."/>
            <person name="Hornsby T."/>
            <person name="Howarth S."/>
            <person name="Huckle E.J."/>
            <person name="Hunt S."/>
            <person name="Jagels K."/>
            <person name="James K.D."/>
            <person name="Jones L."/>
            <person name="Jones M."/>
            <person name="Leather S."/>
            <person name="McDonald S."/>
            <person name="McLean J."/>
            <person name="Mooney P."/>
            <person name="Moule S."/>
            <person name="Mungall K.L."/>
            <person name="Murphy L.D."/>
            <person name="Niblett D."/>
            <person name="Odell C."/>
            <person name="Oliver K."/>
            <person name="O'Neil S."/>
            <person name="Pearson D."/>
            <person name="Quail M.A."/>
            <person name="Rabbinowitsch E."/>
            <person name="Rutherford K.M."/>
            <person name="Rutter S."/>
            <person name="Saunders D."/>
            <person name="Seeger K."/>
            <person name="Sharp S."/>
            <person name="Skelton J."/>
            <person name="Simmonds M.N."/>
            <person name="Squares R."/>
            <person name="Squares S."/>
            <person name="Stevens K."/>
            <person name="Taylor K."/>
            <person name="Taylor R.G."/>
            <person name="Tivey A."/>
            <person name="Walsh S.V."/>
            <person name="Warren T."/>
            <person name="Whitehead S."/>
            <person name="Woodward J.R."/>
            <person name="Volckaert G."/>
            <person name="Aert R."/>
            <person name="Robben J."/>
            <person name="Grymonprez B."/>
            <person name="Weltjens I."/>
            <person name="Vanstreels E."/>
            <person name="Rieger M."/>
            <person name="Schaefer M."/>
            <person name="Mueller-Auer S."/>
            <person name="Gabel C."/>
            <person name="Fuchs M."/>
            <person name="Duesterhoeft A."/>
            <person name="Fritzc C."/>
            <person name="Holzer E."/>
            <person name="Moestl D."/>
            <person name="Hilbert H."/>
            <person name="Borzym K."/>
            <person name="Langer I."/>
            <person name="Beck A."/>
            <person name="Lehrach H."/>
            <person name="Reinhardt R."/>
            <person name="Pohl T.M."/>
            <person name="Eger P."/>
            <person name="Zimmermann W."/>
            <person name="Wedler H."/>
            <person name="Wambutt R."/>
            <person name="Purnelle B."/>
            <person name="Goffeau A."/>
            <person name="Cadieu E."/>
            <person name="Dreano S."/>
            <person name="Gloux S."/>
            <person name="Lelaure V."/>
            <person name="Mottier S."/>
            <person name="Galibert F."/>
            <person name="Aves S.J."/>
            <person name="Xiang Z."/>
            <person name="Hunt C."/>
            <person name="Moore K."/>
            <person name="Hurst S.M."/>
            <person name="Lucas M."/>
            <person name="Rochet M."/>
            <person name="Gaillardin C."/>
            <person name="Tallada V.A."/>
            <person name="Garzon A."/>
            <person name="Thode G."/>
            <person name="Daga R.R."/>
            <person name="Cruzado L."/>
            <person name="Jimenez J."/>
            <person name="Sanchez M."/>
            <person name="del Rey F."/>
            <person name="Benito J."/>
            <person name="Dominguez A."/>
            <person name="Revuelta J.L."/>
            <person name="Moreno S."/>
            <person name="Armstrong J."/>
            <person name="Forsburg S.L."/>
            <person name="Cerutti L."/>
            <person name="Lowe T."/>
            <person name="McCombie W.R."/>
            <person name="Paulsen I."/>
            <person name="Potashkin J."/>
            <person name="Shpakovski G.V."/>
            <person name="Ussery D."/>
            <person name="Barrell B.G."/>
            <person name="Nurse P."/>
        </authorList>
    </citation>
    <scope>NUCLEOTIDE SEQUENCE [LARGE SCALE GENOMIC DNA]</scope>
    <source>
        <strain>972 / ATCC 24843</strain>
    </source>
</reference>
<reference key="2">
    <citation type="journal article" date="2011" name="Science">
        <title>Comparative functional genomics of the fission yeasts.</title>
        <authorList>
            <person name="Rhind N."/>
            <person name="Chen Z."/>
            <person name="Yassour M."/>
            <person name="Thompson D.A."/>
            <person name="Haas B.J."/>
            <person name="Habib N."/>
            <person name="Wapinski I."/>
            <person name="Roy S."/>
            <person name="Lin M.F."/>
            <person name="Heiman D.I."/>
            <person name="Young S.K."/>
            <person name="Furuya K."/>
            <person name="Guo Y."/>
            <person name="Pidoux A."/>
            <person name="Chen H.M."/>
            <person name="Robbertse B."/>
            <person name="Goldberg J.M."/>
            <person name="Aoki K."/>
            <person name="Bayne E.H."/>
            <person name="Berlin A.M."/>
            <person name="Desjardins C.A."/>
            <person name="Dobbs E."/>
            <person name="Dukaj L."/>
            <person name="Fan L."/>
            <person name="FitzGerald M.G."/>
            <person name="French C."/>
            <person name="Gujja S."/>
            <person name="Hansen K."/>
            <person name="Keifenheim D."/>
            <person name="Levin J.Z."/>
            <person name="Mosher R.A."/>
            <person name="Mueller C.A."/>
            <person name="Pfiffner J."/>
            <person name="Priest M."/>
            <person name="Russ C."/>
            <person name="Smialowska A."/>
            <person name="Swoboda P."/>
            <person name="Sykes S.M."/>
            <person name="Vaughn M."/>
            <person name="Vengrova S."/>
            <person name="Yoder R."/>
            <person name="Zeng Q."/>
            <person name="Allshire R."/>
            <person name="Baulcombe D."/>
            <person name="Birren B.W."/>
            <person name="Brown W."/>
            <person name="Ekwall K."/>
            <person name="Kellis M."/>
            <person name="Leatherwood J."/>
            <person name="Levin H."/>
            <person name="Margalit H."/>
            <person name="Martienssen R."/>
            <person name="Nieduszynski C.A."/>
            <person name="Spatafora J.W."/>
            <person name="Friedman N."/>
            <person name="Dalgaard J.Z."/>
            <person name="Baumann P."/>
            <person name="Niki H."/>
            <person name="Regev A."/>
            <person name="Nusbaum C."/>
        </authorList>
    </citation>
    <scope>REVISION OF GENE MODEL</scope>
</reference>
<reference key="3">
    <citation type="journal article" date="2008" name="J. Proteome Res.">
        <title>Phosphoproteome analysis of fission yeast.</title>
        <authorList>
            <person name="Wilson-Grady J.T."/>
            <person name="Villen J."/>
            <person name="Gygi S.P."/>
        </authorList>
    </citation>
    <scope>PHOSPHORYLATION [LARGE SCALE ANALYSIS] AT SER-328</scope>
    <scope>IDENTIFICATION BY MASS SPECTROMETRY</scope>
</reference>
<name>YJNJ_SCHPO</name>
<feature type="chain" id="PRO_0000304097" description="Uncharacterized protein C24B10.19c">
    <location>
        <begin position="1"/>
        <end position="493"/>
    </location>
</feature>
<feature type="region of interest" description="Disordered" evidence="1">
    <location>
        <begin position="466"/>
        <end position="493"/>
    </location>
</feature>
<feature type="compositionally biased region" description="Polar residues" evidence="1">
    <location>
        <begin position="466"/>
        <end position="486"/>
    </location>
</feature>
<feature type="modified residue" description="Phosphoserine" evidence="2">
    <location>
        <position position="328"/>
    </location>
</feature>
<sequence>MVKSCQKKPDIDEFFSFLQSAFHPLQTEELDTFVRNIFEYDDRGRLYNCLLTLVPYERLPIDAEDLSSRKTYARPVLIRQYRSLRFANKEENICRLTPNSAFVPVRDSAVASISTSKVQDFNSYATLTEAQKKTATPVEEKNFLNQIVIQCLDSLETDVETNTTHATLLAVDPTWLIRVSQHTCDRKAVANLCIQYGSQIFYDPSFRNAYELWSNPSVLLAFLKAQRVLVVSDIFTSSTLRSTQGTPMSFPNLALESADNVENVSKPINPRMERFSSEVKSSSILKQQIAAVVEKINYDIRPQRDQIPEENIVPRISYLTSTTTSTKSSPVPESTTTNTTEVLKELNDIQENKSRKNVEKATAATEEMLRGHHKPVEGTTATSEKESIKEEVDLEVNGDGKVEAEERIELESSDSEKELSELIDFLKREHPPEDTPEKRVKIKRIRTLLDTWQQEWRILNKAISNAESNSGRGQNSKTKTTSVNLSRNKRTRT</sequence>
<accession>Q9P7I7</accession>